<reference key="1">
    <citation type="submission" date="2008-05" db="EMBL/GenBank/DDBJ databases">
        <title>Complete genome sequence of Clostridium botulinum E3 str. Alaska E43.</title>
        <authorList>
            <person name="Brinkac L.M."/>
            <person name="Brown J.L."/>
            <person name="Bruce D."/>
            <person name="Detter C."/>
            <person name="Munk C."/>
            <person name="Smith L.A."/>
            <person name="Smith T.J."/>
            <person name="Sutton G."/>
            <person name="Brettin T.S."/>
        </authorList>
    </citation>
    <scope>NUCLEOTIDE SEQUENCE [LARGE SCALE GENOMIC DNA]</scope>
    <source>
        <strain>Alaska E43 / Type E3</strain>
    </source>
</reference>
<organism>
    <name type="scientific">Clostridium botulinum (strain Alaska E43 / Type E3)</name>
    <dbReference type="NCBI Taxonomy" id="508767"/>
    <lineage>
        <taxon>Bacteria</taxon>
        <taxon>Bacillati</taxon>
        <taxon>Bacillota</taxon>
        <taxon>Clostridia</taxon>
        <taxon>Eubacteriales</taxon>
        <taxon>Clostridiaceae</taxon>
        <taxon>Clostridium</taxon>
    </lineage>
</organism>
<comment type="function">
    <text evidence="1">Cleaves peptides in various proteins in a process that requires ATP hydrolysis. Has a chymotrypsin-like activity. Plays a major role in the degradation of misfolded proteins.</text>
</comment>
<comment type="catalytic activity">
    <reaction evidence="1">
        <text>Hydrolysis of proteins to small peptides in the presence of ATP and magnesium. alpha-casein is the usual test substrate. In the absence of ATP, only oligopeptides shorter than five residues are hydrolyzed (such as succinyl-Leu-Tyr-|-NHMec, and Leu-Tyr-Leu-|-Tyr-Trp, in which cleavage of the -Tyr-|-Leu- and -Tyr-|-Trp bonds also occurs).</text>
        <dbReference type="EC" id="3.4.21.92"/>
    </reaction>
</comment>
<comment type="subunit">
    <text evidence="1">Fourteen ClpP subunits assemble into 2 heptameric rings which stack back to back to give a disk-like structure with a central cavity, resembling the structure of eukaryotic proteasomes.</text>
</comment>
<comment type="subcellular location">
    <subcellularLocation>
        <location evidence="1">Cytoplasm</location>
    </subcellularLocation>
</comment>
<comment type="similarity">
    <text evidence="1">Belongs to the peptidase S14 family.</text>
</comment>
<accession>B2UX13</accession>
<proteinExistence type="inferred from homology"/>
<sequence>MSLVPMVVEQTSRGERSYDIFSRLLKERIIMLSGEVNDDSSNLIVSQLLFLESEDPDKDISIYINSPGGSITAGMAIYDTMQYIKPDVSTICVGMAASMGAFLLSSGAKGKRYALPNAEIMIHQPLGGFQGQATDIQIHANRILKIKESLNKILSENTNQPLEVIEADVERDNFMTADEAKAYGLVDKVITKNGTGKDK</sequence>
<dbReference type="EC" id="3.4.21.92" evidence="1"/>
<dbReference type="EMBL" id="CP001078">
    <property type="protein sequence ID" value="ACD54160.1"/>
    <property type="molecule type" value="Genomic_DNA"/>
</dbReference>
<dbReference type="RefSeq" id="WP_003369860.1">
    <property type="nucleotide sequence ID" value="NC_010723.1"/>
</dbReference>
<dbReference type="SMR" id="B2UX13"/>
<dbReference type="MEROPS" id="S14.001"/>
<dbReference type="KEGG" id="cbt:CLH_2618"/>
<dbReference type="HOGENOM" id="CLU_058707_3_2_9"/>
<dbReference type="GO" id="GO:0005737">
    <property type="term" value="C:cytoplasm"/>
    <property type="evidence" value="ECO:0007669"/>
    <property type="project" value="UniProtKB-SubCell"/>
</dbReference>
<dbReference type="GO" id="GO:0009368">
    <property type="term" value="C:endopeptidase Clp complex"/>
    <property type="evidence" value="ECO:0007669"/>
    <property type="project" value="TreeGrafter"/>
</dbReference>
<dbReference type="GO" id="GO:0004176">
    <property type="term" value="F:ATP-dependent peptidase activity"/>
    <property type="evidence" value="ECO:0007669"/>
    <property type="project" value="InterPro"/>
</dbReference>
<dbReference type="GO" id="GO:0051117">
    <property type="term" value="F:ATPase binding"/>
    <property type="evidence" value="ECO:0007669"/>
    <property type="project" value="TreeGrafter"/>
</dbReference>
<dbReference type="GO" id="GO:0004252">
    <property type="term" value="F:serine-type endopeptidase activity"/>
    <property type="evidence" value="ECO:0007669"/>
    <property type="project" value="UniProtKB-UniRule"/>
</dbReference>
<dbReference type="GO" id="GO:0006515">
    <property type="term" value="P:protein quality control for misfolded or incompletely synthesized proteins"/>
    <property type="evidence" value="ECO:0007669"/>
    <property type="project" value="TreeGrafter"/>
</dbReference>
<dbReference type="CDD" id="cd07017">
    <property type="entry name" value="S14_ClpP_2"/>
    <property type="match status" value="1"/>
</dbReference>
<dbReference type="FunFam" id="3.90.226.10:FF:000001">
    <property type="entry name" value="ATP-dependent Clp protease proteolytic subunit"/>
    <property type="match status" value="1"/>
</dbReference>
<dbReference type="Gene3D" id="3.90.226.10">
    <property type="entry name" value="2-enoyl-CoA Hydratase, Chain A, domain 1"/>
    <property type="match status" value="1"/>
</dbReference>
<dbReference type="HAMAP" id="MF_00444">
    <property type="entry name" value="ClpP"/>
    <property type="match status" value="1"/>
</dbReference>
<dbReference type="InterPro" id="IPR001907">
    <property type="entry name" value="ClpP"/>
</dbReference>
<dbReference type="InterPro" id="IPR029045">
    <property type="entry name" value="ClpP/crotonase-like_dom_sf"/>
</dbReference>
<dbReference type="InterPro" id="IPR023562">
    <property type="entry name" value="ClpP/TepA"/>
</dbReference>
<dbReference type="InterPro" id="IPR033135">
    <property type="entry name" value="ClpP_His_AS"/>
</dbReference>
<dbReference type="InterPro" id="IPR018215">
    <property type="entry name" value="ClpP_Ser_AS"/>
</dbReference>
<dbReference type="NCBIfam" id="TIGR00493">
    <property type="entry name" value="clpP"/>
    <property type="match status" value="1"/>
</dbReference>
<dbReference type="NCBIfam" id="NF001368">
    <property type="entry name" value="PRK00277.1"/>
    <property type="match status" value="1"/>
</dbReference>
<dbReference type="NCBIfam" id="NF009205">
    <property type="entry name" value="PRK12553.1"/>
    <property type="match status" value="1"/>
</dbReference>
<dbReference type="PANTHER" id="PTHR10381">
    <property type="entry name" value="ATP-DEPENDENT CLP PROTEASE PROTEOLYTIC SUBUNIT"/>
    <property type="match status" value="1"/>
</dbReference>
<dbReference type="PANTHER" id="PTHR10381:SF70">
    <property type="entry name" value="ATP-DEPENDENT CLP PROTEASE PROTEOLYTIC SUBUNIT"/>
    <property type="match status" value="1"/>
</dbReference>
<dbReference type="Pfam" id="PF00574">
    <property type="entry name" value="CLP_protease"/>
    <property type="match status" value="1"/>
</dbReference>
<dbReference type="PRINTS" id="PR00127">
    <property type="entry name" value="CLPPROTEASEP"/>
</dbReference>
<dbReference type="SUPFAM" id="SSF52096">
    <property type="entry name" value="ClpP/crotonase"/>
    <property type="match status" value="1"/>
</dbReference>
<dbReference type="PROSITE" id="PS00382">
    <property type="entry name" value="CLP_PROTEASE_HIS"/>
    <property type="match status" value="1"/>
</dbReference>
<dbReference type="PROSITE" id="PS00381">
    <property type="entry name" value="CLP_PROTEASE_SER"/>
    <property type="match status" value="1"/>
</dbReference>
<evidence type="ECO:0000255" key="1">
    <source>
        <dbReference type="HAMAP-Rule" id="MF_00444"/>
    </source>
</evidence>
<gene>
    <name evidence="1" type="primary">clpP</name>
    <name type="ordered locus">CLH_2618</name>
</gene>
<protein>
    <recommendedName>
        <fullName evidence="1">ATP-dependent Clp protease proteolytic subunit</fullName>
        <ecNumber evidence="1">3.4.21.92</ecNumber>
    </recommendedName>
    <alternativeName>
        <fullName evidence="1">Endopeptidase Clp</fullName>
    </alternativeName>
</protein>
<feature type="chain" id="PRO_1000189635" description="ATP-dependent Clp protease proteolytic subunit">
    <location>
        <begin position="1"/>
        <end position="199"/>
    </location>
</feature>
<feature type="active site" description="Nucleophile" evidence="1">
    <location>
        <position position="98"/>
    </location>
</feature>
<feature type="active site" evidence="1">
    <location>
        <position position="123"/>
    </location>
</feature>
<name>CLPP_CLOBA</name>
<keyword id="KW-0963">Cytoplasm</keyword>
<keyword id="KW-0378">Hydrolase</keyword>
<keyword id="KW-0645">Protease</keyword>
<keyword id="KW-0720">Serine protease</keyword>